<keyword id="KW-0997">Cell inner membrane</keyword>
<keyword id="KW-1003">Cell membrane</keyword>
<keyword id="KW-0472">Membrane</keyword>
<keyword id="KW-0762">Sugar transport</keyword>
<keyword id="KW-0812">Transmembrane</keyword>
<keyword id="KW-1133">Transmembrane helix</keyword>
<keyword id="KW-0813">Transport</keyword>
<protein>
    <recommendedName>
        <fullName evidence="1">Probable sugar efflux transporter</fullName>
    </recommendedName>
</protein>
<feature type="chain" id="PRO_1000127468" description="Probable sugar efflux transporter">
    <location>
        <begin position="1"/>
        <end position="399"/>
    </location>
</feature>
<feature type="transmembrane region" description="Helical" evidence="1">
    <location>
        <begin position="21"/>
        <end position="41"/>
    </location>
</feature>
<feature type="transmembrane region" description="Helical" evidence="1">
    <location>
        <begin position="56"/>
        <end position="76"/>
    </location>
</feature>
<feature type="transmembrane region" description="Helical" evidence="1">
    <location>
        <begin position="87"/>
        <end position="107"/>
    </location>
</feature>
<feature type="transmembrane region" description="Helical" evidence="1">
    <location>
        <begin position="115"/>
        <end position="135"/>
    </location>
</feature>
<feature type="transmembrane region" description="Helical" evidence="1">
    <location>
        <begin position="142"/>
        <end position="162"/>
    </location>
</feature>
<feature type="transmembrane region" description="Helical" evidence="1">
    <location>
        <begin position="176"/>
        <end position="196"/>
    </location>
</feature>
<feature type="transmembrane region" description="Helical" evidence="1">
    <location>
        <begin position="215"/>
        <end position="235"/>
    </location>
</feature>
<feature type="transmembrane region" description="Helical" evidence="1">
    <location>
        <begin position="252"/>
        <end position="272"/>
    </location>
</feature>
<feature type="transmembrane region" description="Helical" evidence="1">
    <location>
        <begin position="281"/>
        <end position="301"/>
    </location>
</feature>
<feature type="transmembrane region" description="Helical" evidence="1">
    <location>
        <begin position="304"/>
        <end position="324"/>
    </location>
</feature>
<feature type="transmembrane region" description="Helical" evidence="1">
    <location>
        <begin position="339"/>
        <end position="359"/>
    </location>
</feature>
<feature type="transmembrane region" description="Helical" evidence="1">
    <location>
        <begin position="366"/>
        <end position="386"/>
    </location>
</feature>
<accession>B1J9Y3</accession>
<name>SOTB_PSEPW</name>
<gene>
    <name evidence="1" type="primary">sotB</name>
    <name type="ordered locus">PputW619_3070</name>
</gene>
<reference key="1">
    <citation type="submission" date="2008-02" db="EMBL/GenBank/DDBJ databases">
        <title>Complete sequence of Pseudomonas putida W619.</title>
        <authorList>
            <person name="Copeland A."/>
            <person name="Lucas S."/>
            <person name="Lapidus A."/>
            <person name="Barry K."/>
            <person name="Detter J.C."/>
            <person name="Glavina del Rio T."/>
            <person name="Dalin E."/>
            <person name="Tice H."/>
            <person name="Pitluck S."/>
            <person name="Chain P."/>
            <person name="Malfatti S."/>
            <person name="Shin M."/>
            <person name="Vergez L."/>
            <person name="Schmutz J."/>
            <person name="Larimer F."/>
            <person name="Land M."/>
            <person name="Hauser L."/>
            <person name="Kyrpides N."/>
            <person name="Kim E."/>
            <person name="Taghavi S."/>
            <person name="Vangronsveld D."/>
            <person name="van der Lelie D."/>
            <person name="Richardson P."/>
        </authorList>
    </citation>
    <scope>NUCLEOTIDE SEQUENCE [LARGE SCALE GENOMIC DNA]</scope>
    <source>
        <strain>W619</strain>
    </source>
</reference>
<dbReference type="EMBL" id="CP000949">
    <property type="protein sequence ID" value="ACA73560.1"/>
    <property type="molecule type" value="Genomic_DNA"/>
</dbReference>
<dbReference type="SMR" id="B1J9Y3"/>
<dbReference type="STRING" id="390235.PputW619_3070"/>
<dbReference type="KEGG" id="ppw:PputW619_3070"/>
<dbReference type="eggNOG" id="COG2814">
    <property type="taxonomic scope" value="Bacteria"/>
</dbReference>
<dbReference type="HOGENOM" id="CLU_001265_61_1_6"/>
<dbReference type="OrthoDB" id="9788453at2"/>
<dbReference type="GO" id="GO:0005886">
    <property type="term" value="C:plasma membrane"/>
    <property type="evidence" value="ECO:0007669"/>
    <property type="project" value="UniProtKB-SubCell"/>
</dbReference>
<dbReference type="GO" id="GO:0015144">
    <property type="term" value="F:carbohydrate transmembrane transporter activity"/>
    <property type="evidence" value="ECO:0007669"/>
    <property type="project" value="UniProtKB-UniRule"/>
</dbReference>
<dbReference type="CDD" id="cd17324">
    <property type="entry name" value="MFS_NepI_like"/>
    <property type="match status" value="1"/>
</dbReference>
<dbReference type="Gene3D" id="1.20.1250.20">
    <property type="entry name" value="MFS general substrate transporter like domains"/>
    <property type="match status" value="1"/>
</dbReference>
<dbReference type="HAMAP" id="MF_00517">
    <property type="entry name" value="MFS_SotB"/>
    <property type="match status" value="1"/>
</dbReference>
<dbReference type="InterPro" id="IPR011701">
    <property type="entry name" value="MFS"/>
</dbReference>
<dbReference type="InterPro" id="IPR020846">
    <property type="entry name" value="MFS_dom"/>
</dbReference>
<dbReference type="InterPro" id="IPR050189">
    <property type="entry name" value="MFS_Efflux_Transporters"/>
</dbReference>
<dbReference type="InterPro" id="IPR036259">
    <property type="entry name" value="MFS_trans_sf"/>
</dbReference>
<dbReference type="InterPro" id="IPR023495">
    <property type="entry name" value="Sugar_effux_transptr_put"/>
</dbReference>
<dbReference type="NCBIfam" id="NF002921">
    <property type="entry name" value="PRK03545.1"/>
    <property type="match status" value="1"/>
</dbReference>
<dbReference type="PANTHER" id="PTHR43124">
    <property type="entry name" value="PURINE EFFLUX PUMP PBUE"/>
    <property type="match status" value="1"/>
</dbReference>
<dbReference type="PANTHER" id="PTHR43124:SF4">
    <property type="entry name" value="SUGAR EFFLUX TRANSPORTER"/>
    <property type="match status" value="1"/>
</dbReference>
<dbReference type="Pfam" id="PF07690">
    <property type="entry name" value="MFS_1"/>
    <property type="match status" value="1"/>
</dbReference>
<dbReference type="SUPFAM" id="SSF103473">
    <property type="entry name" value="MFS general substrate transporter"/>
    <property type="match status" value="1"/>
</dbReference>
<dbReference type="PROSITE" id="PS50850">
    <property type="entry name" value="MFS"/>
    <property type="match status" value="1"/>
</dbReference>
<comment type="function">
    <text evidence="1">Involved in the efflux of sugars. The physiological role may be the reduction of the intracellular concentration of toxic sugars or sugar metabolites.</text>
</comment>
<comment type="subcellular location">
    <subcellularLocation>
        <location evidence="1">Cell inner membrane</location>
        <topology evidence="1">Multi-pass membrane protein</topology>
    </subcellularLocation>
</comment>
<comment type="similarity">
    <text evidence="1">Belongs to the major facilitator superfamily. SotB (TC 2.A.1.2) family.</text>
</comment>
<sequence length="399" mass="42049">MNGPVPTNLAPTTGGGSWLSVIALALAAFIFNTTEFVPVALLSDIGRSFDMSTAQVGLMLTIYAWVVALASLPMMLLTRNIERRRLLLFVFLVFVVSHLLSWLSQSFAMLLLSRIGIALAHAVFWSITASLAVRVAPPGQQAKALGLLATGTTLAMVLGIPLGRVVGEALGWRVTFLSIAGVALATMLCLMKSLPLLPSQNSGSLRSLPILFKRPALVITYVLVTLVITAQFTAYSYIEPFALQVAQISGERITLLLLLFGGAGVFGSVLFSRYSDRFPHGLLVGSIGLLAACLLLLLPLAGNFYLFAGLSMFWGVAILSFSLSLQSKTLKLASDATDVAMALFSGIYNIGIGGGALLGSIVSSQLGVASVGWAGGSVAVVGLLLAMASTRRFREALSH</sequence>
<evidence type="ECO:0000255" key="1">
    <source>
        <dbReference type="HAMAP-Rule" id="MF_00517"/>
    </source>
</evidence>
<proteinExistence type="inferred from homology"/>
<organism>
    <name type="scientific">Pseudomonas putida (strain W619)</name>
    <dbReference type="NCBI Taxonomy" id="390235"/>
    <lineage>
        <taxon>Bacteria</taxon>
        <taxon>Pseudomonadati</taxon>
        <taxon>Pseudomonadota</taxon>
        <taxon>Gammaproteobacteria</taxon>
        <taxon>Pseudomonadales</taxon>
        <taxon>Pseudomonadaceae</taxon>
        <taxon>Pseudomonas</taxon>
    </lineage>
</organism>